<dbReference type="EMBL" id="CP000816">
    <property type="protein sequence ID" value="ABU82301.1"/>
    <property type="molecule type" value="Genomic_DNA"/>
</dbReference>
<dbReference type="SMR" id="A8ABJ9"/>
<dbReference type="STRING" id="453591.Igni_1124"/>
<dbReference type="KEGG" id="iho:Igni_1124"/>
<dbReference type="eggNOG" id="arCOG04270">
    <property type="taxonomic scope" value="Archaea"/>
</dbReference>
<dbReference type="HOGENOM" id="CLU_100097_0_0_2"/>
<dbReference type="PhylomeDB" id="A8ABJ9"/>
<dbReference type="Proteomes" id="UP000000262">
    <property type="component" value="Chromosome"/>
</dbReference>
<dbReference type="GO" id="GO:0003677">
    <property type="term" value="F:DNA binding"/>
    <property type="evidence" value="ECO:0007669"/>
    <property type="project" value="UniProtKB-KW"/>
</dbReference>
<dbReference type="GO" id="GO:0006355">
    <property type="term" value="P:regulation of DNA-templated transcription"/>
    <property type="evidence" value="ECO:0007669"/>
    <property type="project" value="InterPro"/>
</dbReference>
<dbReference type="GO" id="GO:0006367">
    <property type="term" value="P:transcription initiation at RNA polymerase II promoter"/>
    <property type="evidence" value="ECO:0007669"/>
    <property type="project" value="InterPro"/>
</dbReference>
<dbReference type="Gene3D" id="1.10.10.10">
    <property type="entry name" value="Winged helix-like DNA-binding domain superfamily/Winged helix DNA-binding domain"/>
    <property type="match status" value="1"/>
</dbReference>
<dbReference type="HAMAP" id="MF_01909">
    <property type="entry name" value="TFE_arch"/>
    <property type="match status" value="1"/>
</dbReference>
<dbReference type="InterPro" id="IPR016481">
    <property type="entry name" value="TF_E_archaea"/>
</dbReference>
<dbReference type="InterPro" id="IPR039997">
    <property type="entry name" value="TFE"/>
</dbReference>
<dbReference type="InterPro" id="IPR017919">
    <property type="entry name" value="TFIIE/TFIIEa_HTH"/>
</dbReference>
<dbReference type="InterPro" id="IPR002853">
    <property type="entry name" value="TFIIE_asu"/>
</dbReference>
<dbReference type="InterPro" id="IPR024550">
    <property type="entry name" value="TFIIEa/SarR/Rpc3_HTH_dom"/>
</dbReference>
<dbReference type="InterPro" id="IPR036388">
    <property type="entry name" value="WH-like_DNA-bd_sf"/>
</dbReference>
<dbReference type="InterPro" id="IPR036390">
    <property type="entry name" value="WH_DNA-bd_sf"/>
</dbReference>
<dbReference type="PANTHER" id="PTHR13097:SF7">
    <property type="entry name" value="GENERAL TRANSCRIPTION FACTOR IIE SUBUNIT 1"/>
    <property type="match status" value="1"/>
</dbReference>
<dbReference type="PANTHER" id="PTHR13097">
    <property type="entry name" value="TRANSCRIPTION INITIATION FACTOR IIE, ALPHA SUBUNIT"/>
    <property type="match status" value="1"/>
</dbReference>
<dbReference type="Pfam" id="PF02002">
    <property type="entry name" value="TFIIE_alpha"/>
    <property type="match status" value="1"/>
</dbReference>
<dbReference type="PIRSF" id="PIRSF006373">
    <property type="entry name" value="TF_E_archaea"/>
    <property type="match status" value="1"/>
</dbReference>
<dbReference type="SMART" id="SM00531">
    <property type="entry name" value="TFIIE"/>
    <property type="match status" value="1"/>
</dbReference>
<dbReference type="SUPFAM" id="SSF46785">
    <property type="entry name" value="Winged helix' DNA-binding domain"/>
    <property type="match status" value="1"/>
</dbReference>
<dbReference type="PROSITE" id="PS51344">
    <property type="entry name" value="HTH_TFE_IIE"/>
    <property type="match status" value="1"/>
</dbReference>
<keyword id="KW-0238">DNA-binding</keyword>
<keyword id="KW-1185">Reference proteome</keyword>
<keyword id="KW-0804">Transcription</keyword>
<keyword id="KW-0805">Transcription regulation</keyword>
<gene>
    <name evidence="1" type="primary">tfe</name>
    <name type="ordered locus">Igni_1124</name>
</gene>
<name>TFE_IGNH4</name>
<evidence type="ECO:0000255" key="1">
    <source>
        <dbReference type="HAMAP-Rule" id="MF_01909"/>
    </source>
</evidence>
<reference key="1">
    <citation type="journal article" date="2008" name="Genome Biol.">
        <title>A genomic analysis of the archaeal system Ignicoccus hospitalis-Nanoarchaeum equitans.</title>
        <authorList>
            <person name="Podar M."/>
            <person name="Anderson I."/>
            <person name="Makarova K.S."/>
            <person name="Elkins J.G."/>
            <person name="Ivanova N."/>
            <person name="Wall M.A."/>
            <person name="Lykidis A."/>
            <person name="Mavromatis K."/>
            <person name="Sun H."/>
            <person name="Hudson M.E."/>
            <person name="Chen W."/>
            <person name="Deciu C."/>
            <person name="Hutchison D."/>
            <person name="Eads J.R."/>
            <person name="Anderson A."/>
            <person name="Fernandes F."/>
            <person name="Szeto E."/>
            <person name="Lapidus A."/>
            <person name="Kyrpides N.C."/>
            <person name="Saier M.H. Jr."/>
            <person name="Richardson P.M."/>
            <person name="Rachel R."/>
            <person name="Huber H."/>
            <person name="Eisen J.A."/>
            <person name="Koonin E.V."/>
            <person name="Keller M."/>
            <person name="Stetter K.O."/>
        </authorList>
    </citation>
    <scope>NUCLEOTIDE SEQUENCE [LARGE SCALE GENOMIC DNA]</scope>
    <source>
        <strain>KIN4/I / DSM 18386 / JCM 14125</strain>
    </source>
</reference>
<sequence length="173" mass="20697">MAKKDPLEELLEFVRSVAGEDGVRVFKELMRYEDISEEQLTETLGMKPNDVRRALYKLERYGLVRNYKIRNENDGTYIYYWYVDRETLNRNLLKIKKSVLEKLKRRLESEEDQYFYCPACGLQFSYEEAMGYDFTCPRCGEPLELAESNPRKKLLEKIVKRLEEEIKHEESVL</sequence>
<proteinExistence type="inferred from homology"/>
<feature type="chain" id="PRO_0000326594" description="Transcription factor E">
    <location>
        <begin position="1"/>
        <end position="173"/>
    </location>
</feature>
<feature type="domain" description="HTH TFE/IIEalpha-type" evidence="1">
    <location>
        <begin position="6"/>
        <end position="89"/>
    </location>
</feature>
<protein>
    <recommendedName>
        <fullName evidence="1">Transcription factor E</fullName>
        <shortName evidence="1">TFE</shortName>
    </recommendedName>
    <alternativeName>
        <fullName evidence="1">TFIIE subunit alpha homolog</fullName>
    </alternativeName>
    <alternativeName>
        <fullName evidence="1">Transcription initiation factor TFIIE</fullName>
    </alternativeName>
</protein>
<accession>A8ABJ9</accession>
<organism>
    <name type="scientific">Ignicoccus hospitalis (strain KIN4/I / DSM 18386 / JCM 14125)</name>
    <dbReference type="NCBI Taxonomy" id="453591"/>
    <lineage>
        <taxon>Archaea</taxon>
        <taxon>Thermoproteota</taxon>
        <taxon>Thermoprotei</taxon>
        <taxon>Desulfurococcales</taxon>
        <taxon>Desulfurococcaceae</taxon>
        <taxon>Ignicoccus</taxon>
    </lineage>
</organism>
<comment type="function">
    <text evidence="1">Transcription factor that plays a role in the activation of archaeal genes transcribed by RNA polymerase. Facilitates transcription initiation by enhancing TATA-box recognition by TATA-box-binding protein (Tbp), and transcription factor B (Tfb) and RNA polymerase recruitment. Not absolutely required for transcription in vitro, but particularly important in cases where Tbp or Tfb function is not optimal. It dynamically alters the nucleic acid-binding properties of RNA polymerases by stabilizing the initiation complex and destabilizing elongation complexes. Seems to translocate with the RNA polymerase following initiation and acts by binding to the non template strand of the transcription bubble in elongation complexes.</text>
</comment>
<comment type="subunit">
    <text evidence="1">Monomer. Interaction with RNA polymerase subunits RpoF and RpoE is necessary for Tfe stimulatory transcription activity. Able to interact with Tbp and RNA polymerase in the absence of DNA promoter. Interacts both with the preinitiation and elongation complexes.</text>
</comment>
<comment type="domain">
    <text evidence="1">The winged helix domain is involved in binding to DNA in the preinitiation complex.</text>
</comment>
<comment type="similarity">
    <text evidence="1">Belongs to the TFE family.</text>
</comment>